<reference key="1">
    <citation type="journal article" date="2000" name="Nature">
        <title>Sequence and analysis of chromosome 1 of the plant Arabidopsis thaliana.</title>
        <authorList>
            <person name="Theologis A."/>
            <person name="Ecker J.R."/>
            <person name="Palm C.J."/>
            <person name="Federspiel N.A."/>
            <person name="Kaul S."/>
            <person name="White O."/>
            <person name="Alonso J."/>
            <person name="Altafi H."/>
            <person name="Araujo R."/>
            <person name="Bowman C.L."/>
            <person name="Brooks S.Y."/>
            <person name="Buehler E."/>
            <person name="Chan A."/>
            <person name="Chao Q."/>
            <person name="Chen H."/>
            <person name="Cheuk R.F."/>
            <person name="Chin C.W."/>
            <person name="Chung M.K."/>
            <person name="Conn L."/>
            <person name="Conway A.B."/>
            <person name="Conway A.R."/>
            <person name="Creasy T.H."/>
            <person name="Dewar K."/>
            <person name="Dunn P."/>
            <person name="Etgu P."/>
            <person name="Feldblyum T.V."/>
            <person name="Feng J.-D."/>
            <person name="Fong B."/>
            <person name="Fujii C.Y."/>
            <person name="Gill J.E."/>
            <person name="Goldsmith A.D."/>
            <person name="Haas B."/>
            <person name="Hansen N.F."/>
            <person name="Hughes B."/>
            <person name="Huizar L."/>
            <person name="Hunter J.L."/>
            <person name="Jenkins J."/>
            <person name="Johnson-Hopson C."/>
            <person name="Khan S."/>
            <person name="Khaykin E."/>
            <person name="Kim C.J."/>
            <person name="Koo H.L."/>
            <person name="Kremenetskaia I."/>
            <person name="Kurtz D.B."/>
            <person name="Kwan A."/>
            <person name="Lam B."/>
            <person name="Langin-Hooper S."/>
            <person name="Lee A."/>
            <person name="Lee J.M."/>
            <person name="Lenz C.A."/>
            <person name="Li J.H."/>
            <person name="Li Y.-P."/>
            <person name="Lin X."/>
            <person name="Liu S.X."/>
            <person name="Liu Z.A."/>
            <person name="Luros J.S."/>
            <person name="Maiti R."/>
            <person name="Marziali A."/>
            <person name="Militscher J."/>
            <person name="Miranda M."/>
            <person name="Nguyen M."/>
            <person name="Nierman W.C."/>
            <person name="Osborne B.I."/>
            <person name="Pai G."/>
            <person name="Peterson J."/>
            <person name="Pham P.K."/>
            <person name="Rizzo M."/>
            <person name="Rooney T."/>
            <person name="Rowley D."/>
            <person name="Sakano H."/>
            <person name="Salzberg S.L."/>
            <person name="Schwartz J.R."/>
            <person name="Shinn P."/>
            <person name="Southwick A.M."/>
            <person name="Sun H."/>
            <person name="Tallon L.J."/>
            <person name="Tambunga G."/>
            <person name="Toriumi M.J."/>
            <person name="Town C.D."/>
            <person name="Utterback T."/>
            <person name="Van Aken S."/>
            <person name="Vaysberg M."/>
            <person name="Vysotskaia V.S."/>
            <person name="Walker M."/>
            <person name="Wu D."/>
            <person name="Yu G."/>
            <person name="Fraser C.M."/>
            <person name="Venter J.C."/>
            <person name="Davis R.W."/>
        </authorList>
    </citation>
    <scope>NUCLEOTIDE SEQUENCE [LARGE SCALE GENOMIC DNA]</scope>
    <source>
        <strain>cv. Columbia</strain>
    </source>
</reference>
<reference key="2">
    <citation type="journal article" date="2017" name="Plant J.">
        <title>Araport11: a complete reannotation of the Arabidopsis thaliana reference genome.</title>
        <authorList>
            <person name="Cheng C.Y."/>
            <person name="Krishnakumar V."/>
            <person name="Chan A.P."/>
            <person name="Thibaud-Nissen F."/>
            <person name="Schobel S."/>
            <person name="Town C.D."/>
        </authorList>
    </citation>
    <scope>GENOME REANNOTATION</scope>
    <source>
        <strain>cv. Columbia</strain>
    </source>
</reference>
<reference key="3">
    <citation type="journal article" date="2003" name="Science">
        <title>Empirical analysis of transcriptional activity in the Arabidopsis genome.</title>
        <authorList>
            <person name="Yamada K."/>
            <person name="Lim J."/>
            <person name="Dale J.M."/>
            <person name="Chen H."/>
            <person name="Shinn P."/>
            <person name="Palm C.J."/>
            <person name="Southwick A.M."/>
            <person name="Wu H.C."/>
            <person name="Kim C.J."/>
            <person name="Nguyen M."/>
            <person name="Pham P.K."/>
            <person name="Cheuk R.F."/>
            <person name="Karlin-Newmann G."/>
            <person name="Liu S.X."/>
            <person name="Lam B."/>
            <person name="Sakano H."/>
            <person name="Wu T."/>
            <person name="Yu G."/>
            <person name="Miranda M."/>
            <person name="Quach H.L."/>
            <person name="Tripp M."/>
            <person name="Chang C.H."/>
            <person name="Lee J.M."/>
            <person name="Toriumi M.J."/>
            <person name="Chan M.M."/>
            <person name="Tang C.C."/>
            <person name="Onodera C.S."/>
            <person name="Deng J.M."/>
            <person name="Akiyama K."/>
            <person name="Ansari Y."/>
            <person name="Arakawa T."/>
            <person name="Banh J."/>
            <person name="Banno F."/>
            <person name="Bowser L."/>
            <person name="Brooks S.Y."/>
            <person name="Carninci P."/>
            <person name="Chao Q."/>
            <person name="Choy N."/>
            <person name="Enju A."/>
            <person name="Goldsmith A.D."/>
            <person name="Gurjal M."/>
            <person name="Hansen N.F."/>
            <person name="Hayashizaki Y."/>
            <person name="Johnson-Hopson C."/>
            <person name="Hsuan V.W."/>
            <person name="Iida K."/>
            <person name="Karnes M."/>
            <person name="Khan S."/>
            <person name="Koesema E."/>
            <person name="Ishida J."/>
            <person name="Jiang P.X."/>
            <person name="Jones T."/>
            <person name="Kawai J."/>
            <person name="Kamiya A."/>
            <person name="Meyers C."/>
            <person name="Nakajima M."/>
            <person name="Narusaka M."/>
            <person name="Seki M."/>
            <person name="Sakurai T."/>
            <person name="Satou M."/>
            <person name="Tamse R."/>
            <person name="Vaysberg M."/>
            <person name="Wallender E.K."/>
            <person name="Wong C."/>
            <person name="Yamamura Y."/>
            <person name="Yuan S."/>
            <person name="Shinozaki K."/>
            <person name="Davis R.W."/>
            <person name="Theologis A."/>
            <person name="Ecker J.R."/>
        </authorList>
    </citation>
    <scope>NUCLEOTIDE SEQUENCE [LARGE SCALE MRNA]</scope>
    <source>
        <strain>cv. Columbia</strain>
    </source>
</reference>
<reference key="4">
    <citation type="submission" date="2006-07" db="EMBL/GenBank/DDBJ databases">
        <title>Large-scale analysis of RIKEN Arabidopsis full-length (RAFL) cDNAs.</title>
        <authorList>
            <person name="Totoki Y."/>
            <person name="Seki M."/>
            <person name="Ishida J."/>
            <person name="Nakajima M."/>
            <person name="Enju A."/>
            <person name="Kamiya A."/>
            <person name="Narusaka M."/>
            <person name="Shin-i T."/>
            <person name="Nakagawa M."/>
            <person name="Sakamoto N."/>
            <person name="Oishi K."/>
            <person name="Kohara Y."/>
            <person name="Kobayashi M."/>
            <person name="Toyoda A."/>
            <person name="Sakaki Y."/>
            <person name="Sakurai T."/>
            <person name="Iida K."/>
            <person name="Akiyama K."/>
            <person name="Satou M."/>
            <person name="Toyoda T."/>
            <person name="Konagaya A."/>
            <person name="Carninci P."/>
            <person name="Kawai J."/>
            <person name="Hayashizaki Y."/>
            <person name="Shinozaki K."/>
        </authorList>
    </citation>
    <scope>NUCLEOTIDE SEQUENCE [LARGE SCALE MRNA]</scope>
    <source>
        <strain>cv. Columbia</strain>
    </source>
</reference>
<reference key="5">
    <citation type="submission" date="2002-03" db="EMBL/GenBank/DDBJ databases">
        <title>Full-length cDNA from Arabidopsis thaliana.</title>
        <authorList>
            <person name="Brover V.V."/>
            <person name="Troukhan M.E."/>
            <person name="Alexandrov N.A."/>
            <person name="Lu Y.-P."/>
            <person name="Flavell R.B."/>
            <person name="Feldmann K.A."/>
        </authorList>
    </citation>
    <scope>NUCLEOTIDE SEQUENCE [LARGE SCALE MRNA]</scope>
</reference>
<reference key="6">
    <citation type="journal article" date="2003" name="Plant Physiol.">
        <title>New insights into the respiratory chain of plant mitochondria. Supercomplexes and a unique composition of complex II.</title>
        <authorList>
            <person name="Eubel H."/>
            <person name="Jansch L."/>
            <person name="Braun H.P."/>
        </authorList>
    </citation>
    <scope>SUBUNIT</scope>
</reference>
<reference key="7">
    <citation type="journal article" date="2004" name="Plant Cell">
        <title>Experimental analysis of the Arabidopsis mitochondrial proteome highlights signaling and regulatory components, provides assessment of targeting prediction programs, and indicates plant-specific mitochondrial proteins.</title>
        <authorList>
            <person name="Heazlewood J.L."/>
            <person name="Tonti-Filippini J.S."/>
            <person name="Gout A.M."/>
            <person name="Day D.A."/>
            <person name="Whelan J."/>
            <person name="Millar A.H."/>
        </authorList>
    </citation>
    <scope>IDENTIFICATION BY MASS SPECTROMETRY</scope>
    <scope>SUBCELLULAR LOCATION [LARGE SCALE ANALYSIS]</scope>
    <source>
        <strain>cv. Landsberg erecta</strain>
    </source>
</reference>
<reference key="8">
    <citation type="journal article" date="2008" name="J. Proteome Res.">
        <title>Resolving and identifying protein components of plant mitochondrial respiratory complexes using three dimensions of gel electrophoresis.</title>
        <authorList>
            <person name="Meyer E.H."/>
            <person name="Taylor N.L."/>
            <person name="Millar A.H."/>
        </authorList>
    </citation>
    <scope>SUBCELLULAR LOCATION</scope>
    <scope>SUBUNIT</scope>
    <scope>IDENTIFICATION BY MASS SPECTROMETRY</scope>
</reference>
<reference key="9">
    <citation type="journal article" date="2008" name="Plant Physiol.">
        <title>Arabidopsis PPR40 connects abiotic stress responses to mitochondrial electron transport.</title>
        <authorList>
            <person name="Zsigmond L."/>
            <person name="Rigo G."/>
            <person name="Szarka A."/>
            <person name="Szekely G."/>
            <person name="Oetvoes K."/>
            <person name="Darula Z."/>
            <person name="Medzihradszky K.F."/>
            <person name="Koncz C."/>
            <person name="Koncz Z."/>
            <person name="Szabados L."/>
        </authorList>
    </citation>
    <scope>SUBUNIT</scope>
    <scope>IDENTIFICATION BY MASS SPECTROMETRY</scope>
    <scope>NOMENCLATURE</scope>
    <source>
        <strain>cv. Columbia</strain>
    </source>
</reference>
<organism>
    <name type="scientific">Arabidopsis thaliana</name>
    <name type="common">Mouse-ear cress</name>
    <dbReference type="NCBI Taxonomy" id="3702"/>
    <lineage>
        <taxon>Eukaryota</taxon>
        <taxon>Viridiplantae</taxon>
        <taxon>Streptophyta</taxon>
        <taxon>Embryophyta</taxon>
        <taxon>Tracheophyta</taxon>
        <taxon>Spermatophyta</taxon>
        <taxon>Magnoliopsida</taxon>
        <taxon>eudicotyledons</taxon>
        <taxon>Gunneridae</taxon>
        <taxon>Pentapetalae</taxon>
        <taxon>rosids</taxon>
        <taxon>malvids</taxon>
        <taxon>Brassicales</taxon>
        <taxon>Brassicaceae</taxon>
        <taxon>Camelineae</taxon>
        <taxon>Arabidopsis</taxon>
    </lineage>
</organism>
<feature type="transit peptide" description="Mitochondrion" evidence="3">
    <location>
        <begin position="1"/>
        <end position="59"/>
    </location>
</feature>
<feature type="chain" id="PRO_0000026774" description="Probable mitochondrial-processing peptidase subunit alpha-1, mitochondrial">
    <location>
        <begin position="60"/>
        <end position="503"/>
    </location>
</feature>
<feature type="sequence conflict" description="In Ref. 5; AAM65922." evidence="7" ref="5">
    <original>V</original>
    <variation>F</variation>
    <location>
        <position position="492"/>
    </location>
</feature>
<feature type="strand" evidence="10">
    <location>
        <begin position="79"/>
        <end position="82"/>
    </location>
</feature>
<feature type="strand" evidence="10">
    <location>
        <begin position="88"/>
        <end position="92"/>
    </location>
</feature>
<feature type="strand" evidence="10">
    <location>
        <begin position="95"/>
        <end position="106"/>
    </location>
</feature>
<feature type="helix" evidence="10">
    <location>
        <begin position="109"/>
        <end position="111"/>
    </location>
</feature>
<feature type="turn" evidence="10">
    <location>
        <begin position="112"/>
        <end position="115"/>
    </location>
</feature>
<feature type="helix" evidence="10">
    <location>
        <begin position="119"/>
        <end position="125"/>
    </location>
</feature>
<feature type="turn" evidence="10">
    <location>
        <begin position="126"/>
        <end position="128"/>
    </location>
</feature>
<feature type="strand" evidence="10">
    <location>
        <begin position="131"/>
        <end position="134"/>
    </location>
</feature>
<feature type="helix" evidence="10">
    <location>
        <begin position="136"/>
        <end position="145"/>
    </location>
</feature>
<feature type="strand" evidence="10">
    <location>
        <begin position="149"/>
        <end position="154"/>
    </location>
</feature>
<feature type="strand" evidence="10">
    <location>
        <begin position="159"/>
        <end position="166"/>
    </location>
</feature>
<feature type="helix" evidence="10">
    <location>
        <begin position="167"/>
        <end position="169"/>
    </location>
</feature>
<feature type="helix" evidence="10">
    <location>
        <begin position="170"/>
        <end position="182"/>
    </location>
</feature>
<feature type="helix" evidence="10">
    <location>
        <begin position="188"/>
        <end position="203"/>
    </location>
</feature>
<feature type="helix" evidence="10">
    <location>
        <begin position="204"/>
        <end position="207"/>
    </location>
</feature>
<feature type="helix" evidence="10">
    <location>
        <begin position="209"/>
        <end position="221"/>
    </location>
</feature>
<feature type="strand" evidence="10">
    <location>
        <begin position="222"/>
        <end position="224"/>
    </location>
</feature>
<feature type="helix" evidence="10">
    <location>
        <begin position="225"/>
        <end position="227"/>
    </location>
</feature>
<feature type="helix" evidence="10">
    <location>
        <begin position="234"/>
        <end position="237"/>
    </location>
</feature>
<feature type="helix" evidence="10">
    <location>
        <begin position="242"/>
        <end position="252"/>
    </location>
</feature>
<feature type="helix" evidence="10">
    <location>
        <begin position="255"/>
        <end position="257"/>
    </location>
</feature>
<feature type="strand" evidence="10">
    <location>
        <begin position="258"/>
        <end position="265"/>
    </location>
</feature>
<feature type="helix" evidence="10">
    <location>
        <begin position="267"/>
        <end position="278"/>
    </location>
</feature>
<feature type="strand" evidence="10">
    <location>
        <begin position="297"/>
        <end position="302"/>
    </location>
</feature>
<feature type="strand" evidence="10">
    <location>
        <begin position="309"/>
        <end position="316"/>
    </location>
</feature>
<feature type="strand" evidence="10">
    <location>
        <begin position="319"/>
        <end position="321"/>
    </location>
</feature>
<feature type="helix" evidence="10">
    <location>
        <begin position="324"/>
        <end position="335"/>
    </location>
</feature>
<feature type="helix" evidence="10">
    <location>
        <begin position="353"/>
        <end position="361"/>
    </location>
</feature>
<feature type="strand" evidence="10">
    <location>
        <begin position="368"/>
        <end position="374"/>
    </location>
</feature>
<feature type="strand" evidence="10">
    <location>
        <begin position="379"/>
        <end position="383"/>
    </location>
</feature>
<feature type="turn" evidence="10">
    <location>
        <begin position="389"/>
        <end position="391"/>
    </location>
</feature>
<feature type="helix" evidence="10">
    <location>
        <begin position="392"/>
        <end position="408"/>
    </location>
</feature>
<feature type="helix" evidence="10">
    <location>
        <begin position="413"/>
        <end position="430"/>
    </location>
</feature>
<feature type="helix" evidence="10">
    <location>
        <begin position="434"/>
        <end position="447"/>
    </location>
</feature>
<feature type="helix" evidence="10">
    <location>
        <begin position="454"/>
        <end position="461"/>
    </location>
</feature>
<feature type="helix" evidence="10">
    <location>
        <begin position="466"/>
        <end position="477"/>
    </location>
</feature>
<feature type="strand" evidence="10">
    <location>
        <begin position="482"/>
        <end position="487"/>
    </location>
</feature>
<feature type="strand" evidence="10">
    <location>
        <begin position="490"/>
        <end position="492"/>
    </location>
</feature>
<feature type="helix" evidence="10">
    <location>
        <begin position="495"/>
        <end position="501"/>
    </location>
</feature>
<accession>Q9ZU25</accession>
<accession>Q0WW81</accession>
<accession>Q8L9K3</accession>
<evidence type="ECO:0000250" key="1">
    <source>
        <dbReference type="UniProtKB" id="P07257"/>
    </source>
</evidence>
<evidence type="ECO:0000250" key="2">
    <source>
        <dbReference type="UniProtKB" id="P11914"/>
    </source>
</evidence>
<evidence type="ECO:0000255" key="3"/>
<evidence type="ECO:0000269" key="4">
    <source>
    </source>
</evidence>
<evidence type="ECO:0000269" key="5">
    <source>
    </source>
</evidence>
<evidence type="ECO:0000269" key="6">
    <source>
    </source>
</evidence>
<evidence type="ECO:0000305" key="7"/>
<evidence type="ECO:0000312" key="8">
    <source>
        <dbReference type="Araport" id="AT1G51980"/>
    </source>
</evidence>
<evidence type="ECO:0000312" key="9">
    <source>
        <dbReference type="EMBL" id="AAD12673.1"/>
    </source>
</evidence>
<evidence type="ECO:0007829" key="10">
    <source>
        <dbReference type="PDB" id="8BEP"/>
    </source>
</evidence>
<comment type="function">
    <text evidence="2">Substrate recognition and binding subunit of the essential mitochondrial processing protease (MPP), which cleaves the mitochondrial sequence off newly imported precursors proteins.</text>
</comment>
<comment type="function">
    <text evidence="1">Component of the ubiquinol-cytochrome c oxidoreductase, a multisubunit transmembrane complex that is part of the mitochondrial electron transport chain which drives oxidative phosphorylation. The respiratory chain contains 3 multisubunit complexes succinate dehydrogenase (complex II, CII), ubiquinol-cytochrome c oxidoreductase (cytochrome b-c1 complex, complex III, CIII) and cytochrome c oxidase (complex IV, CIV), that cooperate to transfer electrons derived from NADH and succinate to molecular oxygen, creating an electrochemical gradient over the inner membrane that drives transmembrane transport and the ATP synthase. The cytochrome b-c1 complex catalyzes electron transfer from ubiquinol to cytochrome c, linking this redox reaction to translocation of protons across the mitochondrial inner membrane, with protons being carried across the membrane as hydrogens on the quinol. In the process called Q cycle, 2 protons are consumed from the matrix, 4 protons are released into the intermembrane space and 2 electrons are passed to cytochrome c.</text>
</comment>
<comment type="subunit">
    <text evidence="2 4 5 6">Heterodimer of alpha and beta subunits, forming the mitochondrial processing protease (MPP) in which subunit alpha is involved in substrate recognition and binding and subunit beta is the catalytic subunit (By similarity). Component of the ubiquinol-cytochrome c oxidoreductase (cytochrome b-c1 complex, complex III, CIII), a multisubunit enzyme composed of 10 subunits. The complex is composed of 3 respiratory subunits cytochrome b (MT-CYB), cytochrome c1 (CYC1-1 or CYC1-2) and Rieske protein (UCR1-1 or UCR1-2), 2 core protein subunits MPPalpha1 (or MPPalpha2) and MPPB, and 5 low-molecular weight protein subunits QCR7-1 (or QCR7-2), UCRQ-1 (or UCRQ-2), QCR9, UCRY and probably QCR6-1 (or QCR6-2) (PubMed:18189341, PubMed:18305213). The complex exists as an obligatory dimer and forms supercomplexes (SCs) in the inner mitochondrial membrane with NADH-ubiquinone oxidoreductase (complex I, CI), resulting in different assemblies (supercomplexes SCI(1)III(2) and SCI(2)III(4)) (PubMed:12970493).</text>
</comment>
<comment type="subcellular location">
    <subcellularLocation>
        <location evidence="2">Mitochondrion matrix</location>
    </subcellularLocation>
    <subcellularLocation>
        <location evidence="5">Mitochondrion inner membrane</location>
        <topology evidence="1">Peripheral membrane protein</topology>
        <orientation evidence="1">Matrix side</orientation>
    </subcellularLocation>
</comment>
<comment type="alternative products">
    <event type="alternative splicing"/>
    <isoform>
        <id>Q9ZU25-1</id>
        <name>1</name>
        <sequence type="displayed"/>
    </isoform>
    <text>A number of isoforms are produced. According to EST sequences.</text>
</comment>
<comment type="similarity">
    <text evidence="7">Belongs to the peptidase M16 family.</text>
</comment>
<comment type="caution">
    <text evidence="7">Does not seem to have a protease activity as it lacks one of the conserved zinc-binding sites.</text>
</comment>
<comment type="sequence caution" evidence="7">
    <conflict type="frameshift">
        <sequence resource="EMBL-CDS" id="BAE98617"/>
    </conflict>
</comment>
<sequence>MYRTAASRARALKGVLTRSLRPARYASSSAVAETSSSTPAYLSWLSGGSRAALTSLDMPLQGVSLPPPLADKVEPSKLQITTLPNGLKIASETTPNPAASIGLYVDCGSIYEAPYFHGATHLLERMAFKSTLNRTHFRLVREIEAIGGNTSASASREQMSYTIDALKTYVPEMVEVLIDSVRNPAFLDWEVNEELRKMKVEIAELAKNPMGFLLEAIHSAGYSGPLASPLYAPESALDRLNGELLEEFMTENFTAARMVLAASGVEHEELLKVAEPLTSDLPNVPPQLAPKSQYVGGDFRQHTGGEATHFAVAFEVPGWNNEKEAVTATVLQMLMGGGGSFSAGGPGKGMHSWLYRRVLNEYQEVQSCTAFTSIFNDTGLFGIYGCSSPQFAAKAIELAAKELKDVAGGKVNQAHLDRAKAATKSAVLMNLESRMIAAEDIGRQILTYGERKPVDQFLKSVDQLTLKDIADFTSKVISKPLTMGSFGDVLAVPSYDTISSKFR</sequence>
<proteinExistence type="evidence at protein level"/>
<name>MPPA1_ARATH</name>
<dbReference type="EMBL" id="AC006216">
    <property type="protein sequence ID" value="AAD12673.1"/>
    <property type="molecule type" value="Genomic_DNA"/>
</dbReference>
<dbReference type="EMBL" id="CP002684">
    <property type="protein sequence ID" value="AEE32742.1"/>
    <property type="molecule type" value="Genomic_DNA"/>
</dbReference>
<dbReference type="EMBL" id="AY065421">
    <property type="protein sequence ID" value="AAL38862.1"/>
    <property type="molecule type" value="mRNA"/>
</dbReference>
<dbReference type="EMBL" id="AY091255">
    <property type="protein sequence ID" value="AAM14194.1"/>
    <property type="molecule type" value="mRNA"/>
</dbReference>
<dbReference type="EMBL" id="AK226475">
    <property type="protein sequence ID" value="BAE98617.1"/>
    <property type="status" value="ALT_FRAME"/>
    <property type="molecule type" value="mRNA"/>
</dbReference>
<dbReference type="EMBL" id="AY088384">
    <property type="protein sequence ID" value="AAM65922.1"/>
    <property type="molecule type" value="mRNA"/>
</dbReference>
<dbReference type="PIR" id="D96559">
    <property type="entry name" value="D96559"/>
</dbReference>
<dbReference type="RefSeq" id="NP_175610.1">
    <molecule id="Q9ZU25-1"/>
    <property type="nucleotide sequence ID" value="NM_104079.4"/>
</dbReference>
<dbReference type="PDB" id="8BEP">
    <property type="method" value="EM"/>
    <property type="resolution" value="2.29 A"/>
    <property type="chains" value="A/K=1-503"/>
</dbReference>
<dbReference type="PDB" id="8BPX">
    <property type="method" value="EM"/>
    <property type="resolution" value="2.09 A"/>
    <property type="chains" value="AA/BA=1-503"/>
</dbReference>
<dbReference type="PDB" id="8BQ5">
    <property type="method" value="EM"/>
    <property type="resolution" value="2.73 A"/>
    <property type="chains" value="AA/BA=1-503"/>
</dbReference>
<dbReference type="PDB" id="8BQ6">
    <property type="method" value="EM"/>
    <property type="resolution" value="2.80 A"/>
    <property type="chains" value="AA/BA=1-503"/>
</dbReference>
<dbReference type="PDBsum" id="8BEP"/>
<dbReference type="PDBsum" id="8BPX"/>
<dbReference type="PDBsum" id="8BQ5"/>
<dbReference type="PDBsum" id="8BQ6"/>
<dbReference type="EMDB" id="EMD-16008"/>
<dbReference type="EMDB" id="EMD-16168"/>
<dbReference type="EMDB" id="EMD-16171"/>
<dbReference type="EMDB" id="EMD-16172"/>
<dbReference type="SMR" id="Q9ZU25"/>
<dbReference type="BioGRID" id="26852">
    <property type="interactions" value="7"/>
</dbReference>
<dbReference type="FunCoup" id="Q9ZU25">
    <property type="interactions" value="4757"/>
</dbReference>
<dbReference type="IntAct" id="Q9ZU25">
    <property type="interactions" value="3"/>
</dbReference>
<dbReference type="MINT" id="Q9ZU25"/>
<dbReference type="STRING" id="3702.Q9ZU25"/>
<dbReference type="GlyGen" id="Q9ZU25">
    <property type="glycosylation" value="1 site"/>
</dbReference>
<dbReference type="SwissPalm" id="Q9ZU25"/>
<dbReference type="PaxDb" id="3702-AT1G51980.1"/>
<dbReference type="ProteomicsDB" id="238903">
    <molecule id="Q9ZU25-1"/>
</dbReference>
<dbReference type="EnsemblPlants" id="AT1G51980.1">
    <molecule id="Q9ZU25-1"/>
    <property type="protein sequence ID" value="AT1G51980.1"/>
    <property type="gene ID" value="AT1G51980"/>
</dbReference>
<dbReference type="GeneID" id="841627"/>
<dbReference type="Gramene" id="AT1G51980.1">
    <molecule id="Q9ZU25-1"/>
    <property type="protein sequence ID" value="AT1G51980.1"/>
    <property type="gene ID" value="AT1G51980"/>
</dbReference>
<dbReference type="KEGG" id="ath:AT1G51980"/>
<dbReference type="Araport" id="AT1G51980"/>
<dbReference type="TAIR" id="AT1G51980"/>
<dbReference type="eggNOG" id="KOG2067">
    <property type="taxonomic scope" value="Eukaryota"/>
</dbReference>
<dbReference type="InParanoid" id="Q9ZU25"/>
<dbReference type="OMA" id="RYQPANK"/>
<dbReference type="OrthoDB" id="10251424at2759"/>
<dbReference type="PhylomeDB" id="Q9ZU25"/>
<dbReference type="BioCyc" id="ARA:AT1G51980-MONOMER"/>
<dbReference type="BioCyc" id="MetaCyc:AT1G51980-MONOMER"/>
<dbReference type="PRO" id="PR:Q9ZU25"/>
<dbReference type="Proteomes" id="UP000006548">
    <property type="component" value="Chromosome 1"/>
</dbReference>
<dbReference type="ExpressionAtlas" id="Q9ZU25">
    <property type="expression patterns" value="baseline and differential"/>
</dbReference>
<dbReference type="GO" id="GO:0005743">
    <property type="term" value="C:mitochondrial inner membrane"/>
    <property type="evidence" value="ECO:0007669"/>
    <property type="project" value="UniProtKB-SubCell"/>
</dbReference>
<dbReference type="GO" id="GO:0005759">
    <property type="term" value="C:mitochondrial matrix"/>
    <property type="evidence" value="ECO:0007669"/>
    <property type="project" value="UniProtKB-SubCell"/>
</dbReference>
<dbReference type="GO" id="GO:0005739">
    <property type="term" value="C:mitochondrion"/>
    <property type="evidence" value="ECO:0007005"/>
    <property type="project" value="TAIR"/>
</dbReference>
<dbReference type="GO" id="GO:0005634">
    <property type="term" value="C:nucleus"/>
    <property type="evidence" value="ECO:0007005"/>
    <property type="project" value="TAIR"/>
</dbReference>
<dbReference type="GO" id="GO:0000325">
    <property type="term" value="C:plant-type vacuole"/>
    <property type="evidence" value="ECO:0007005"/>
    <property type="project" value="TAIR"/>
</dbReference>
<dbReference type="GO" id="GO:0005524">
    <property type="term" value="F:ATP binding"/>
    <property type="evidence" value="ECO:0007005"/>
    <property type="project" value="TAIR"/>
</dbReference>
<dbReference type="GO" id="GO:0046872">
    <property type="term" value="F:metal ion binding"/>
    <property type="evidence" value="ECO:0007669"/>
    <property type="project" value="InterPro"/>
</dbReference>
<dbReference type="GO" id="GO:0004222">
    <property type="term" value="F:metalloendopeptidase activity"/>
    <property type="evidence" value="ECO:0007669"/>
    <property type="project" value="InterPro"/>
</dbReference>
<dbReference type="GO" id="GO:0006508">
    <property type="term" value="P:proteolysis"/>
    <property type="evidence" value="ECO:0007669"/>
    <property type="project" value="InterPro"/>
</dbReference>
<dbReference type="FunFam" id="3.30.830.10:FF:000022">
    <property type="entry name" value="mitochondrial-processing peptidase subunit alpha"/>
    <property type="match status" value="1"/>
</dbReference>
<dbReference type="FunFam" id="3.30.830.10:FF:000008">
    <property type="entry name" value="Mitochondrial-processing peptidase subunit beta"/>
    <property type="match status" value="1"/>
</dbReference>
<dbReference type="Gene3D" id="3.30.830.10">
    <property type="entry name" value="Metalloenzyme, LuxS/M16 peptidase-like"/>
    <property type="match status" value="2"/>
</dbReference>
<dbReference type="InterPro" id="IPR011249">
    <property type="entry name" value="Metalloenz_LuxS/M16"/>
</dbReference>
<dbReference type="InterPro" id="IPR050361">
    <property type="entry name" value="MPP/UQCRC_Complex"/>
</dbReference>
<dbReference type="InterPro" id="IPR011765">
    <property type="entry name" value="Pept_M16_N"/>
</dbReference>
<dbReference type="InterPro" id="IPR001431">
    <property type="entry name" value="Pept_M16_Zn_BS"/>
</dbReference>
<dbReference type="InterPro" id="IPR007863">
    <property type="entry name" value="Peptidase_M16_C"/>
</dbReference>
<dbReference type="PANTHER" id="PTHR11851">
    <property type="entry name" value="METALLOPROTEASE"/>
    <property type="match status" value="1"/>
</dbReference>
<dbReference type="PANTHER" id="PTHR11851:SF203">
    <property type="entry name" value="MITOCHONDRIAL-PROCESSING PEPTIDASE SUBUNIT ALPHA-1, MITOCHONDRIAL-RELATED"/>
    <property type="match status" value="1"/>
</dbReference>
<dbReference type="Pfam" id="PF00675">
    <property type="entry name" value="Peptidase_M16"/>
    <property type="match status" value="1"/>
</dbReference>
<dbReference type="Pfam" id="PF05193">
    <property type="entry name" value="Peptidase_M16_C"/>
    <property type="match status" value="1"/>
</dbReference>
<dbReference type="SUPFAM" id="SSF63411">
    <property type="entry name" value="LuxS/MPP-like metallohydrolase"/>
    <property type="match status" value="2"/>
</dbReference>
<dbReference type="PROSITE" id="PS00143">
    <property type="entry name" value="INSULINASE"/>
    <property type="match status" value="1"/>
</dbReference>
<protein>
    <recommendedName>
        <fullName>Probable mitochondrial-processing peptidase subunit alpha-1, mitochondrial</fullName>
    </recommendedName>
    <alternativeName>
        <fullName>Alpha-MPP 1</fullName>
    </alternativeName>
    <alternativeName>
        <fullName>Complex III subunit II</fullName>
    </alternativeName>
    <alternativeName>
        <fullName>Core protein II</fullName>
    </alternativeName>
    <alternativeName>
        <fullName>Cytochrome b-c1 complex subunit 2-1, mitochondrial</fullName>
    </alternativeName>
    <alternativeName>
        <fullName evidence="7">Inactive zinc metalloprotease alpha-1</fullName>
    </alternativeName>
    <alternativeName>
        <fullName>Ubiquinol-cytochrome c oxidoreductase core protein 2-1</fullName>
    </alternativeName>
</protein>
<keyword id="KW-0002">3D-structure</keyword>
<keyword id="KW-0025">Alternative splicing</keyword>
<keyword id="KW-0472">Membrane</keyword>
<keyword id="KW-0496">Mitochondrion</keyword>
<keyword id="KW-0999">Mitochondrion inner membrane</keyword>
<keyword id="KW-1185">Reference proteome</keyword>
<keyword id="KW-0809">Transit peptide</keyword>
<gene>
    <name type="primary">MPPalpha1</name>
    <name evidence="8" type="ordered locus">At1g51980</name>
    <name evidence="9" type="ORF">F5F19.4</name>
</gene>